<sequence>MANTGRIPLWLVGLVGGLAVITMLGLFIYGSYSGLGSSL</sequence>
<proteinExistence type="inferred from homology"/>
<feature type="chain" id="PRO_0000276122" description="Photosystem II reaction center protein J">
    <location>
        <begin position="1"/>
        <end position="39"/>
    </location>
</feature>
<feature type="transmembrane region" description="Helical" evidence="1">
    <location>
        <begin position="9"/>
        <end position="29"/>
    </location>
</feature>
<reference key="1">
    <citation type="journal article" date="2007" name="Mol. Genet. Genomics">
        <title>Chloroplast genomes of the diatoms Phaeodactylum tricornutum and Thalassiosira pseudonana: comparison with other plastid genomes of the red lineage.</title>
        <authorList>
            <person name="Oudot-Le Secq M.-P."/>
            <person name="Grimwood J."/>
            <person name="Shapiro H."/>
            <person name="Armbrust E.V."/>
            <person name="Bowler C."/>
            <person name="Green B.R."/>
        </authorList>
    </citation>
    <scope>NUCLEOTIDE SEQUENCE [LARGE SCALE GENOMIC DNA]</scope>
    <source>
        <strain>CCAP 1055/1</strain>
    </source>
</reference>
<protein>
    <recommendedName>
        <fullName evidence="1">Photosystem II reaction center protein J</fullName>
        <shortName evidence="1">PSII-J</shortName>
    </recommendedName>
</protein>
<comment type="function">
    <text evidence="1">One of the components of the core complex of photosystem II (PSII). PSII is a light-driven water:plastoquinone oxidoreductase that uses light energy to abstract electrons from H(2)O, generating O(2) and a proton gradient subsequently used for ATP formation. It consists of a core antenna complex that captures photons, and an electron transfer chain that converts photonic excitation into a charge separation.</text>
</comment>
<comment type="subunit">
    <text evidence="1">PSII is composed of 1 copy each of membrane proteins PsbA, PsbB, PsbC, PsbD, PsbE, PsbF, PsbH, PsbI, PsbJ, PsbK, PsbL, PsbM, PsbT, PsbX, PsbY, PsbZ, Psb30/Ycf12, at least 3 peripheral proteins of the oxygen-evolving complex and a large number of cofactors. It forms dimeric complexes.</text>
</comment>
<comment type="subcellular location">
    <subcellularLocation>
        <location evidence="1">Plastid</location>
        <location evidence="1">Chloroplast thylakoid membrane</location>
        <topology evidence="1">Single-pass membrane protein</topology>
    </subcellularLocation>
</comment>
<comment type="similarity">
    <text evidence="1">Belongs to the PsbJ family.</text>
</comment>
<dbReference type="EMBL" id="EF067920">
    <property type="protein sequence ID" value="ABK20595.1"/>
    <property type="molecule type" value="Genomic_DNA"/>
</dbReference>
<dbReference type="RefSeq" id="YP_874372.1">
    <property type="nucleotide sequence ID" value="NC_008588.1"/>
</dbReference>
<dbReference type="SMR" id="A0T0A6"/>
<dbReference type="STRING" id="556484.A0T0A6"/>
<dbReference type="GeneID" id="4524575"/>
<dbReference type="InParanoid" id="A0T0A6"/>
<dbReference type="Proteomes" id="UP000000759">
    <property type="component" value="Chloroplast"/>
</dbReference>
<dbReference type="GO" id="GO:0009535">
    <property type="term" value="C:chloroplast thylakoid membrane"/>
    <property type="evidence" value="ECO:0007669"/>
    <property type="project" value="UniProtKB-SubCell"/>
</dbReference>
<dbReference type="GO" id="GO:0009539">
    <property type="term" value="C:photosystem II reaction center"/>
    <property type="evidence" value="ECO:0007669"/>
    <property type="project" value="InterPro"/>
</dbReference>
<dbReference type="GO" id="GO:0015979">
    <property type="term" value="P:photosynthesis"/>
    <property type="evidence" value="ECO:0007669"/>
    <property type="project" value="UniProtKB-UniRule"/>
</dbReference>
<dbReference type="Gene3D" id="6.10.250.2070">
    <property type="match status" value="1"/>
</dbReference>
<dbReference type="HAMAP" id="MF_01305">
    <property type="entry name" value="PSII_PsbJ"/>
    <property type="match status" value="1"/>
</dbReference>
<dbReference type="InterPro" id="IPR002682">
    <property type="entry name" value="PSII_PsbJ"/>
</dbReference>
<dbReference type="InterPro" id="IPR037267">
    <property type="entry name" value="PSII_PsbJ_sf"/>
</dbReference>
<dbReference type="NCBIfam" id="NF002722">
    <property type="entry name" value="PRK02565.1"/>
    <property type="match status" value="1"/>
</dbReference>
<dbReference type="PANTHER" id="PTHR34812">
    <property type="entry name" value="PHOTOSYSTEM II REACTION CENTER PROTEIN J"/>
    <property type="match status" value="1"/>
</dbReference>
<dbReference type="PANTHER" id="PTHR34812:SF3">
    <property type="entry name" value="PHOTOSYSTEM II REACTION CENTER PROTEIN J"/>
    <property type="match status" value="1"/>
</dbReference>
<dbReference type="Pfam" id="PF01788">
    <property type="entry name" value="PsbJ"/>
    <property type="match status" value="1"/>
</dbReference>
<dbReference type="SUPFAM" id="SSF161021">
    <property type="entry name" value="Photosystem II reaction center protein J, PsbJ"/>
    <property type="match status" value="1"/>
</dbReference>
<organism>
    <name type="scientific">Phaeodactylum tricornutum (strain CCAP 1055/1)</name>
    <dbReference type="NCBI Taxonomy" id="556484"/>
    <lineage>
        <taxon>Eukaryota</taxon>
        <taxon>Sar</taxon>
        <taxon>Stramenopiles</taxon>
        <taxon>Ochrophyta</taxon>
        <taxon>Bacillariophyta</taxon>
        <taxon>Bacillariophyceae</taxon>
        <taxon>Bacillariophycidae</taxon>
        <taxon>Naviculales</taxon>
        <taxon>Phaeodactylaceae</taxon>
        <taxon>Phaeodactylum</taxon>
    </lineage>
</organism>
<name>PSBJ_PHATC</name>
<gene>
    <name evidence="1" type="primary">psbJ</name>
</gene>
<keyword id="KW-0150">Chloroplast</keyword>
<keyword id="KW-0472">Membrane</keyword>
<keyword id="KW-0602">Photosynthesis</keyword>
<keyword id="KW-0604">Photosystem II</keyword>
<keyword id="KW-0934">Plastid</keyword>
<keyword id="KW-0674">Reaction center</keyword>
<keyword id="KW-1185">Reference proteome</keyword>
<keyword id="KW-0793">Thylakoid</keyword>
<keyword id="KW-0812">Transmembrane</keyword>
<keyword id="KW-1133">Transmembrane helix</keyword>
<geneLocation type="chloroplast"/>
<evidence type="ECO:0000255" key="1">
    <source>
        <dbReference type="HAMAP-Rule" id="MF_01305"/>
    </source>
</evidence>
<accession>A0T0A6</accession>